<proteinExistence type="evidence at protein level"/>
<keyword id="KW-0108">Calcium channel impairing toxin</keyword>
<keyword id="KW-0903">Direct protein sequencing</keyword>
<keyword id="KW-1015">Disulfide bond</keyword>
<keyword id="KW-0872">Ion channel impairing toxin</keyword>
<keyword id="KW-0960">Knottin</keyword>
<keyword id="KW-0528">Neurotoxin</keyword>
<keyword id="KW-0964">Secreted</keyword>
<keyword id="KW-0732">Signal</keyword>
<keyword id="KW-0800">Toxin</keyword>
<keyword id="KW-1218">Voltage-gated calcium channel impairing toxin</keyword>
<evidence type="ECO:0000250" key="1">
    <source>
        <dbReference type="UniProtKB" id="P30288"/>
    </source>
</evidence>
<evidence type="ECO:0000255" key="2"/>
<evidence type="ECO:0000269" key="3">
    <source>
    </source>
</evidence>
<evidence type="ECO:0000269" key="4">
    <source>
    </source>
</evidence>
<evidence type="ECO:0000269" key="5">
    <source>
    </source>
</evidence>
<evidence type="ECO:0000269" key="6">
    <source>
    </source>
</evidence>
<evidence type="ECO:0000303" key="7">
    <source>
    </source>
</evidence>
<evidence type="ECO:0000303" key="8">
    <source>
    </source>
</evidence>
<evidence type="ECO:0000303" key="9">
    <source>
    </source>
</evidence>
<evidence type="ECO:0000305" key="10"/>
<evidence type="ECO:0000305" key="11">
    <source>
    </source>
</evidence>
<evidence type="ECO:0000305" key="12">
    <source>
    </source>
</evidence>
<sequence>MWFKIQVLVLAITLITLGIQAEPNSSPNNPLIVEEDRAECAAVYERCGKGYKRCCEERPCKCNIVMDNCTCKKFISELFGFGK</sequence>
<comment type="function">
    <text evidence="3 5">Antagonist of L-type calcium channels (Cav1/CACNA1) (PubMed:10098851). In GH3 neuroendocrinal cell line, it reversibly inhibits the A-type potassium current but does not block other potassium currents or calcium channels (PubMed:10098851). Shows an important acetylcholine-mediated antiarrhythmogenic effect in isolated hearts (PubMed:21115025). In vivo, causes paralysis in the posterior limbs and gradual decreases in movement and aggression during 24 hours at dose levels of 5 ug per mouse (PubMed:10098851).</text>
</comment>
<comment type="subcellular location">
    <subcellularLocation>
        <location evidence="4 6">Secreted</location>
    </subcellularLocation>
</comment>
<comment type="tissue specificity">
    <text evidence="11 12">Expressed by the venom gland.</text>
</comment>
<comment type="domain">
    <text evidence="1">The presence of a 'disulfide through disulfide knot' structurally defines this protein as a knottin.</text>
</comment>
<comment type="similarity">
    <text evidence="10">Belongs to the neurotoxin 02 (plectoxin) family.</text>
</comment>
<organism>
    <name type="scientific">Phoneutria nigriventer</name>
    <name type="common">Brazilian armed spider</name>
    <name type="synonym">Ctenus nigriventer</name>
    <dbReference type="NCBI Taxonomy" id="6918"/>
    <lineage>
        <taxon>Eukaryota</taxon>
        <taxon>Metazoa</taxon>
        <taxon>Ecdysozoa</taxon>
        <taxon>Arthropoda</taxon>
        <taxon>Chelicerata</taxon>
        <taxon>Arachnida</taxon>
        <taxon>Araneae</taxon>
        <taxon>Araneomorphae</taxon>
        <taxon>Entelegynae</taxon>
        <taxon>Lycosoidea</taxon>
        <taxon>Ctenidae</taxon>
        <taxon>Phoneutria</taxon>
    </lineage>
</organism>
<name>TX20A_PHONI</name>
<accession>O76200</accession>
<reference key="1">
    <citation type="journal article" date="1999" name="J. Neurochem.">
        <title>Phoneutria nigriventer toxin Tx3-1 blocks A-type K+ currents controlling Ca2+ oscillation frequency in GH3 cells.</title>
        <authorList>
            <person name="Kushmerick C."/>
            <person name="Kalapothakis E."/>
            <person name="Beirao P.S.L."/>
            <person name="Penaforte C.L."/>
            <person name="Prado V.F."/>
            <person name="Cruz J.S."/>
            <person name="Diniz C.R."/>
            <person name="Cordeiro M.N."/>
            <person name="Gomez M.V."/>
            <person name="Romano-Silva M.A."/>
            <person name="Prado M.A.M."/>
        </authorList>
    </citation>
    <scope>NUCLEOTIDE SEQUENCE [MRNA]</scope>
    <scope>FUNCTION</scope>
</reference>
<reference key="2">
    <citation type="journal article" date="1993" name="Toxicon">
        <title>Purification and amino acid sequences of six Tx3 type neurotoxins from the venom of the Brazilian 'armed' spider Phoneutria nigriventer (Keys).</title>
        <authorList>
            <person name="Cordeiro M.N."/>
            <person name="De Figueiredo S.G."/>
            <person name="Valentim A.D.C."/>
            <person name="Diniz C.R."/>
            <person name="von Eickstedt V.R.D."/>
            <person name="Gilroy J."/>
            <person name="Richardson M."/>
        </authorList>
    </citation>
    <scope>PROTEIN SEQUENCE OF 38-77</scope>
    <scope>SUBCELLULAR LOCATION</scope>
    <source>
        <tissue>Venom</tissue>
    </source>
</reference>
<reference key="3">
    <citation type="journal article" date="2006" name="Comp. Biochem. Physiol.">
        <title>Comparison of the partial proteomes of the venoms of Brazilian spiders of the genus Phoneutria.</title>
        <authorList>
            <person name="Richardson M."/>
            <person name="Pimenta A.M."/>
            <person name="Bemquerer M.P."/>
            <person name="Santoro M.M."/>
            <person name="Beirao P.S."/>
            <person name="Lima M.E."/>
            <person name="Figueiredo S.G."/>
            <person name="Bloch C. Jr."/>
            <person name="Vasconcelos E.A."/>
            <person name="Campos F.A."/>
            <person name="Gomes P.C."/>
            <person name="Cordeiro M.N."/>
        </authorList>
    </citation>
    <scope>PROTEIN SEQUENCE OF 38-77</scope>
    <scope>SUBCELLULAR LOCATION</scope>
    <source>
        <tissue>Venom</tissue>
    </source>
</reference>
<reference key="4">
    <citation type="journal article" date="2011" name="Toxicon">
        <title>Antiarrhythmogenic effects of a neurotoxin from the spider Phoneutria nigriventer.</title>
        <authorList>
            <person name="Almeida A.P."/>
            <person name="Andrade A.B."/>
            <person name="Ferreira A.J."/>
            <person name="Pires A.C."/>
            <person name="Damasceno D.D."/>
            <person name="Alves M.N."/>
            <person name="Gomes E.R."/>
            <person name="Kushmerick C."/>
            <person name="Lima R.F."/>
            <person name="Prado M.A."/>
            <person name="Prado V.F."/>
            <person name="Richardson M."/>
            <person name="Cordeiro M.N."/>
            <person name="Guatimosim S."/>
            <person name="Gomez M."/>
        </authorList>
    </citation>
    <scope>FUNCTION</scope>
    <scope>RECOMBINANT EXPRESSION</scope>
    <source>
        <tissue>Venom</tissue>
    </source>
</reference>
<feature type="signal peptide" evidence="2">
    <location>
        <begin position="1"/>
        <end position="21"/>
    </location>
</feature>
<feature type="propeptide" id="PRO_0000035517" evidence="12">
    <location>
        <begin position="22"/>
        <end position="37"/>
    </location>
</feature>
<feature type="chain" id="PRO_0000035518" description="Kappa-ctenitoxin-Pn1a" evidence="6">
    <location>
        <begin position="38"/>
        <end position="77"/>
    </location>
</feature>
<feature type="propeptide" id="PRO_0000035519" evidence="12">
    <location>
        <begin position="78"/>
        <end position="83"/>
    </location>
</feature>
<feature type="disulfide bond" evidence="1">
    <location>
        <begin position="40"/>
        <end position="55"/>
    </location>
</feature>
<feature type="disulfide bond" evidence="1">
    <location>
        <begin position="47"/>
        <end position="60"/>
    </location>
</feature>
<feature type="disulfide bond" evidence="1">
    <location>
        <begin position="54"/>
        <end position="71"/>
    </location>
</feature>
<feature type="disulfide bond" evidence="1">
    <location>
        <begin position="62"/>
        <end position="69"/>
    </location>
</feature>
<protein>
    <recommendedName>
        <fullName evidence="10">Kappa-ctenitoxin-Pn1a</fullName>
        <shortName evidence="10">Kappa-CNTX-Pn1a</shortName>
    </recommendedName>
    <alternativeName>
        <fullName evidence="7 9">Neurotoxin Tx3-1</fullName>
    </alternativeName>
    <alternativeName>
        <fullName>PNTx3-1</fullName>
    </alternativeName>
    <alternativeName>
        <fullName evidence="8">PhKv</fullName>
    </alternativeName>
</protein>
<dbReference type="EMBL" id="AF015663">
    <property type="protein sequence ID" value="AAC26167.1"/>
    <property type="molecule type" value="mRNA"/>
</dbReference>
<dbReference type="PIR" id="A44336">
    <property type="entry name" value="A44336"/>
</dbReference>
<dbReference type="ArachnoServer" id="AS000255">
    <property type="toxin name" value="kappa-ctenitoxin-Pn1a"/>
</dbReference>
<dbReference type="GO" id="GO:0005576">
    <property type="term" value="C:extracellular region"/>
    <property type="evidence" value="ECO:0007669"/>
    <property type="project" value="UniProtKB-SubCell"/>
</dbReference>
<dbReference type="GO" id="GO:0005246">
    <property type="term" value="F:calcium channel regulator activity"/>
    <property type="evidence" value="ECO:0007669"/>
    <property type="project" value="UniProtKB-KW"/>
</dbReference>
<dbReference type="GO" id="GO:0008200">
    <property type="term" value="F:ion channel inhibitor activity"/>
    <property type="evidence" value="ECO:0007669"/>
    <property type="project" value="InterPro"/>
</dbReference>
<dbReference type="GO" id="GO:0090729">
    <property type="term" value="F:toxin activity"/>
    <property type="evidence" value="ECO:0007669"/>
    <property type="project" value="UniProtKB-KW"/>
</dbReference>
<dbReference type="CDD" id="cd12960">
    <property type="entry name" value="Spider_toxin"/>
    <property type="match status" value="1"/>
</dbReference>
<dbReference type="Gene3D" id="4.10.40.10">
    <property type="match status" value="1"/>
</dbReference>
<dbReference type="InterPro" id="IPR004169">
    <property type="entry name" value="Spidertoxin"/>
</dbReference>
<dbReference type="Pfam" id="PF02819">
    <property type="entry name" value="Toxin_9"/>
    <property type="match status" value="1"/>
</dbReference>
<dbReference type="SUPFAM" id="SSF57059">
    <property type="entry name" value="omega toxin-like"/>
    <property type="match status" value="1"/>
</dbReference>